<evidence type="ECO:0000305" key="1"/>
<keyword id="KW-0496">Mitochondrion</keyword>
<keyword id="KW-0507">mRNA processing</keyword>
<proteinExistence type="predicted"/>
<dbReference type="EMBL" id="S50535">
    <property type="protein sequence ID" value="AAB24367.1"/>
    <property type="molecule type" value="Genomic_DNA"/>
</dbReference>
<dbReference type="VEuPathDB" id="FungiDB:SPAR_I01760"/>
<dbReference type="OrthoDB" id="4041867at2759"/>
<dbReference type="GO" id="GO:0005739">
    <property type="term" value="C:mitochondrion"/>
    <property type="evidence" value="ECO:0007669"/>
    <property type="project" value="UniProtKB-SubCell"/>
</dbReference>
<dbReference type="GO" id="GO:0000402">
    <property type="term" value="F:crossed form four-way junction DNA binding"/>
    <property type="evidence" value="ECO:0007669"/>
    <property type="project" value="TreeGrafter"/>
</dbReference>
<dbReference type="GO" id="GO:0004520">
    <property type="term" value="F:DNA endonuclease activity"/>
    <property type="evidence" value="ECO:0007669"/>
    <property type="project" value="TreeGrafter"/>
</dbReference>
<dbReference type="GO" id="GO:0070336">
    <property type="term" value="F:flap-structured DNA binding"/>
    <property type="evidence" value="ECO:0007669"/>
    <property type="project" value="TreeGrafter"/>
</dbReference>
<dbReference type="GO" id="GO:0000403">
    <property type="term" value="F:Y-form DNA binding"/>
    <property type="evidence" value="ECO:0007669"/>
    <property type="project" value="TreeGrafter"/>
</dbReference>
<dbReference type="GO" id="GO:0000002">
    <property type="term" value="P:mitochondrial genome maintenance"/>
    <property type="evidence" value="ECO:0007669"/>
    <property type="project" value="TreeGrafter"/>
</dbReference>
<dbReference type="GO" id="GO:0006397">
    <property type="term" value="P:mRNA processing"/>
    <property type="evidence" value="ECO:0007669"/>
    <property type="project" value="UniProtKB-KW"/>
</dbReference>
<dbReference type="Gene3D" id="3.30.420.10">
    <property type="entry name" value="Ribonuclease H-like superfamily/Ribonuclease H"/>
    <property type="match status" value="1"/>
</dbReference>
<dbReference type="InterPro" id="IPR039197">
    <property type="entry name" value="Mrs1/Cce1"/>
</dbReference>
<dbReference type="InterPro" id="IPR036397">
    <property type="entry name" value="RNaseH_sf"/>
</dbReference>
<dbReference type="InterPro" id="IPR015242">
    <property type="entry name" value="Ydc2_cat"/>
</dbReference>
<dbReference type="PANTHER" id="PTHR28072">
    <property type="entry name" value="CRUCIFORM CUTTING ENDONUCLEASE 1, MITOCHONDRIAL-RELATED"/>
    <property type="match status" value="1"/>
</dbReference>
<dbReference type="PANTHER" id="PTHR28072:SF1">
    <property type="entry name" value="CRUCIFORM CUTTING ENDONUCLEASE 1, MITOCHONDRIAL-RELATED"/>
    <property type="match status" value="1"/>
</dbReference>
<dbReference type="Pfam" id="PF09159">
    <property type="entry name" value="Ydc2-catalyt"/>
    <property type="match status" value="1"/>
</dbReference>
<gene>
    <name type="primary">MRS1</name>
</gene>
<protein>
    <recommendedName>
        <fullName>Mitochondrial RNA-splicing protein MRS1</fullName>
    </recommendedName>
</protein>
<sequence length="363" mass="41680">MSPKNLTRSVVPAIDLYCRKANFKTLKFLSMILCSKKEWYDNTKAPVRNFLVSRCAVFEQLRNRLVDEGKVNLFGVFLTNDSFSFCKMTVDDKFDTSLVDWQKIPFDYSFATERRQHISLLPPDTLFATEKIISLLGVSPNMANLVSIERQRSDLMDFSCKLQSNILEHLLYAKCQGVQVTSTNEEARLLAAICNPEFIDAFWCELTPIRASLKENPSISVPQEYQIYDPVIRATIKEVVAKRLLRSAFDNDIDPLMRLRLDKGWKFKFPTLSSTTDLDFSLKDCLSLDTRRDAYDMTEVFLATMASSKTLRTYSNLVDIVMKDNGRFDSGILKQFNDYVKQEKLNLQNFQAGSSEFLKGVKI</sequence>
<reference key="1">
    <citation type="journal article" date="1992" name="Gene Expr.">
        <title>The MRS1 gene of S. douglasii: co-evolution of mitochondrial introns and specific splicing proteins encoded by nuclear genes.</title>
        <authorList>
            <person name="Herbert C.J."/>
            <person name="Macadre C."/>
            <person name="Becam A.-M."/>
            <person name="Lazowska J."/>
            <person name="Slonimski P.P."/>
        </authorList>
    </citation>
    <scope>NUCLEOTIDE SEQUENCE [GENOMIC DNA]</scope>
</reference>
<comment type="function">
    <text>Function in mitochondrial RNA splicing in the excision of mitochondrial group I introns aI1 and aI5 beta from COX1 and bI3 from COB transcripts and thus would be involved in obtaining the correct structure of the intron, to allow the RNA catalyzed reactions to occur.</text>
</comment>
<comment type="subcellular location">
    <subcellularLocation>
        <location evidence="1">Mitochondrion</location>
    </subcellularLocation>
</comment>
<accession>P41905</accession>
<name>MRS1_SACPA</name>
<feature type="chain" id="PRO_0000096579" description="Mitochondrial RNA-splicing protein MRS1">
    <location>
        <begin position="1"/>
        <end position="363"/>
    </location>
</feature>
<organism>
    <name type="scientific">Saccharomyces paradoxus</name>
    <name type="common">Yeast</name>
    <name type="synonym">Saccharomyces douglasii</name>
    <dbReference type="NCBI Taxonomy" id="27291"/>
    <lineage>
        <taxon>Eukaryota</taxon>
        <taxon>Fungi</taxon>
        <taxon>Dikarya</taxon>
        <taxon>Ascomycota</taxon>
        <taxon>Saccharomycotina</taxon>
        <taxon>Saccharomycetes</taxon>
        <taxon>Saccharomycetales</taxon>
        <taxon>Saccharomycetaceae</taxon>
        <taxon>Saccharomyces</taxon>
    </lineage>
</organism>